<protein>
    <recommendedName>
        <fullName>Anti-sigma-E factor RseA</fullName>
    </recommendedName>
    <alternativeName>
        <fullName>Regulator of SigE</fullName>
    </alternativeName>
    <alternativeName>
        <fullName>Sigma-E anti-sigma factor RseA</fullName>
    </alternativeName>
    <alternativeName>
        <fullName>Sigma-E factor negative regulatory protein</fullName>
    </alternativeName>
</protein>
<name>RSEA_ECOL6</name>
<dbReference type="EMBL" id="AE014075">
    <property type="protein sequence ID" value="AAN81545.1"/>
    <property type="molecule type" value="Genomic_DNA"/>
</dbReference>
<dbReference type="RefSeq" id="WP_001168459.1">
    <property type="nucleotide sequence ID" value="NZ_CP051263.1"/>
</dbReference>
<dbReference type="SMR" id="P0AFX8"/>
<dbReference type="STRING" id="199310.c3096"/>
<dbReference type="GeneID" id="75172686"/>
<dbReference type="KEGG" id="ecc:c3096"/>
<dbReference type="eggNOG" id="COG3073">
    <property type="taxonomic scope" value="Bacteria"/>
</dbReference>
<dbReference type="HOGENOM" id="CLU_108851_1_0_6"/>
<dbReference type="BioCyc" id="ECOL199310:C3096-MONOMER"/>
<dbReference type="Proteomes" id="UP000001410">
    <property type="component" value="Chromosome"/>
</dbReference>
<dbReference type="GO" id="GO:0005886">
    <property type="term" value="C:plasma membrane"/>
    <property type="evidence" value="ECO:0007669"/>
    <property type="project" value="UniProtKB-SubCell"/>
</dbReference>
<dbReference type="GO" id="GO:0016989">
    <property type="term" value="F:sigma factor antagonist activity"/>
    <property type="evidence" value="ECO:0007669"/>
    <property type="project" value="InterPro"/>
</dbReference>
<dbReference type="CDD" id="cd16328">
    <property type="entry name" value="RseA_N"/>
    <property type="match status" value="1"/>
</dbReference>
<dbReference type="FunFam" id="1.10.10.880:FF:000001">
    <property type="entry name" value="Anti-sigma-E factor RseA"/>
    <property type="match status" value="1"/>
</dbReference>
<dbReference type="FunFam" id="1.20.5.3960:FF:000001">
    <property type="entry name" value="Anti-sigma-E factor RseA"/>
    <property type="match status" value="1"/>
</dbReference>
<dbReference type="Gene3D" id="1.20.5.3960">
    <property type="match status" value="1"/>
</dbReference>
<dbReference type="Gene3D" id="1.10.10.880">
    <property type="entry name" value="Anti sigma-E protein RseA, N-terminal domain"/>
    <property type="match status" value="1"/>
</dbReference>
<dbReference type="InterPro" id="IPR052383">
    <property type="entry name" value="Anti-sigma-E_RseA-like"/>
</dbReference>
<dbReference type="InterPro" id="IPR005573">
    <property type="entry name" value="Anti-sigma_E_RseA_C"/>
</dbReference>
<dbReference type="InterPro" id="IPR005572">
    <property type="entry name" value="Anti-sigma_E_RseA_N"/>
</dbReference>
<dbReference type="InterPro" id="IPR036147">
    <property type="entry name" value="Anti-sigma_E_RseA_N_sf"/>
</dbReference>
<dbReference type="InterPro" id="IPR026279">
    <property type="entry name" value="RseA"/>
</dbReference>
<dbReference type="NCBIfam" id="NF008116">
    <property type="entry name" value="PRK10863.1"/>
    <property type="match status" value="1"/>
</dbReference>
<dbReference type="PANTHER" id="PTHR38104">
    <property type="match status" value="1"/>
</dbReference>
<dbReference type="PANTHER" id="PTHR38104:SF1">
    <property type="entry name" value="ANTI-SIGMA-E FACTOR RSEA"/>
    <property type="match status" value="1"/>
</dbReference>
<dbReference type="Pfam" id="PF03873">
    <property type="entry name" value="RseA_C"/>
    <property type="match status" value="1"/>
</dbReference>
<dbReference type="Pfam" id="PF03872">
    <property type="entry name" value="RseA_N"/>
    <property type="match status" value="1"/>
</dbReference>
<dbReference type="PIRSF" id="PIRSF016938">
    <property type="entry name" value="RseA"/>
    <property type="match status" value="1"/>
</dbReference>
<dbReference type="SUPFAM" id="SSF89069">
    <property type="entry name" value="N-terminal, cytoplasmic domain of anti-sigmaE factor RseA"/>
    <property type="match status" value="1"/>
</dbReference>
<feature type="chain" id="PRO_0000097481" description="Anti-sigma-E factor RseA">
    <location>
        <begin position="1"/>
        <end position="216"/>
    </location>
</feature>
<feature type="transmembrane region" description="Helical" evidence="2">
    <location>
        <begin position="101"/>
        <end position="118"/>
    </location>
</feature>
<feature type="region of interest" description="Disordered" evidence="3">
    <location>
        <begin position="146"/>
        <end position="166"/>
    </location>
</feature>
<feature type="site" description="Cleavage; by RseP" evidence="1">
    <location>
        <begin position="108"/>
        <end position="109"/>
    </location>
</feature>
<evidence type="ECO:0000250" key="1"/>
<evidence type="ECO:0000255" key="2"/>
<evidence type="ECO:0000256" key="3">
    <source>
        <dbReference type="SAM" id="MobiDB-lite"/>
    </source>
</evidence>
<evidence type="ECO:0000305" key="4"/>
<reference key="1">
    <citation type="journal article" date="2002" name="Proc. Natl. Acad. Sci. U.S.A.">
        <title>Extensive mosaic structure revealed by the complete genome sequence of uropathogenic Escherichia coli.</title>
        <authorList>
            <person name="Welch R.A."/>
            <person name="Burland V."/>
            <person name="Plunkett G. III"/>
            <person name="Redford P."/>
            <person name="Roesch P."/>
            <person name="Rasko D."/>
            <person name="Buckles E.L."/>
            <person name="Liou S.-R."/>
            <person name="Boutin A."/>
            <person name="Hackett J."/>
            <person name="Stroud D."/>
            <person name="Mayhew G.F."/>
            <person name="Rose D.J."/>
            <person name="Zhou S."/>
            <person name="Schwartz D.C."/>
            <person name="Perna N.T."/>
            <person name="Mobley H.L.T."/>
            <person name="Donnenberg M.S."/>
            <person name="Blattner F.R."/>
        </authorList>
    </citation>
    <scope>NUCLEOTIDE SEQUENCE [LARGE SCALE GENOMIC DNA]</scope>
    <source>
        <strain>CFT073 / ATCC 700928 / UPEC</strain>
    </source>
</reference>
<keyword id="KW-0997">Cell inner membrane</keyword>
<keyword id="KW-1003">Cell membrane</keyword>
<keyword id="KW-0472">Membrane</keyword>
<keyword id="KW-1185">Reference proteome</keyword>
<keyword id="KW-0735">Signal-anchor</keyword>
<keyword id="KW-0812">Transmembrane</keyword>
<keyword id="KW-1133">Transmembrane helix</keyword>
<sequence>MQKEQLSALMDGETLDSELLNELAHNPEMQKTWESYHLIRDSMRGDTPEVLHFDISSRVMAAIEEEPVRQPATLIPEAQPAPHQWQKMPFWQKVRPWAAQLTQMGVAACVSLAVIVGVQHYNGQSETSQQPETPVFNTLPMMGKASPVSLGVPSEATANNGQQQQVQEQRRRINAMLQDYELQRRLHSEQLQFEQAQTQQAAVQVPGIQTLGTQSQ</sequence>
<proteinExistence type="inferred from homology"/>
<gene>
    <name type="primary">rseA</name>
    <name type="synonym">mclA</name>
    <name type="ordered locus">c3096</name>
</gene>
<organism>
    <name type="scientific">Escherichia coli O6:H1 (strain CFT073 / ATCC 700928 / UPEC)</name>
    <dbReference type="NCBI Taxonomy" id="199310"/>
    <lineage>
        <taxon>Bacteria</taxon>
        <taxon>Pseudomonadati</taxon>
        <taxon>Pseudomonadota</taxon>
        <taxon>Gammaproteobacteria</taxon>
        <taxon>Enterobacterales</taxon>
        <taxon>Enterobacteriaceae</taxon>
        <taxon>Escherichia</taxon>
    </lineage>
</organism>
<accession>P0AFX8</accession>
<accession>P38106</accession>
<comment type="function">
    <text evidence="1">An anti-sigma factor for extracytoplasmic function (ECF) sigma factor sigma-E (RpoE). ECF sigma factors are held in an inactive form by an anti-sigma factor until released by regulated intramembrane proteolysis (RIP). RIP occurs when an extracytoplasmic signal triggers a concerted proteolytic cascade to transmit information and elicit cellular responses. The membrane-spanning regulatory substrate protein is first cut periplasmically (site-1 protease, S1P, DegS), then within the membrane itself (site-2 protease, S2P, RseP), while cytoplasmic proteases finish degrading the anti-sigma factor, liberating sigma-E (By similarity).</text>
</comment>
<comment type="subunit">
    <text evidence="1">Interacts 1:1 with ECF RNA polymerase sigma-E (RpoE); this inhibits the interaction of sigma-E with the RNA polymerase catalytic core and leads to a decreased expression of sigma-E-regulated genes. Interacts with RseB with 1:1 stoichiometry. The liberated N-terminus forms a complex with SspB and RpoE (By similarity).</text>
</comment>
<comment type="subcellular location">
    <subcellularLocation>
        <location evidence="1">Cell inner membrane</location>
        <topology evidence="1">Single-pass type II membrane protein</topology>
    </subcellularLocation>
    <text evidence="1">Following cleavage by DegS the large fragment of the protein is still in the inner membrane and retains its anti-sigma-E activity.</text>
</comment>
<comment type="domain">
    <text evidence="1">The N-terminal cytosolic domain interacts with sigma-E. After degradation by RseP binds to SspB, targeting RseA for degradation by the ClpX-ClpP protease (By similarity).</text>
</comment>
<comment type="domain">
    <text evidence="1">The C-terminal periplasmic domain interacts with RseB and is also the target for DegS.</text>
</comment>
<comment type="PTM">
    <text evidence="1">Sequentially cleaved by DegS (a site-1 protease) in its periplasmic domain between Val-148 and Ser-149, then by RseP (a site-2 protease) between positions Ala-108 and Cys-109. The N-terminal fragment is then degraded by primarily ClpX-ClpP in an ATP-dependent fashion. Sequential cleavage by DegS, RseP and ClpX-ClpP frees RpoE from RseA (By similarity).</text>
</comment>
<comment type="similarity">
    <text evidence="4">Belongs to the RseA family.</text>
</comment>